<sequence>MDINASLIVQMLVFVVFIGLTMKFIWPPLTKALEARRKNIADGLAAAEEGRKELELAEIKSKEQLTEAKTQAAHIIEQANQRANHIVEEAKNKAREEGAHLIQLAKNEIEQEYNAAKTELLKQISTIAVAGAQKILQREVDKASNDRLVDELVSEI</sequence>
<reference key="1">
    <citation type="journal article" date="2009" name="Infect. Immun.">
        <title>Comparative genomics reveal extensive transposon-mediated genomic plasticity and diversity among potential effector proteins within the genus Coxiella.</title>
        <authorList>
            <person name="Beare P.A."/>
            <person name="Unsworth N."/>
            <person name="Andoh M."/>
            <person name="Voth D.E."/>
            <person name="Omsland A."/>
            <person name="Gilk S.D."/>
            <person name="Williams K.P."/>
            <person name="Sobral B.W."/>
            <person name="Kupko J.J. III"/>
            <person name="Porcella S.F."/>
            <person name="Samuel J.E."/>
            <person name="Heinzen R.A."/>
        </authorList>
    </citation>
    <scope>NUCLEOTIDE SEQUENCE [LARGE SCALE GENOMIC DNA]</scope>
    <source>
        <strain>CbuK_Q154</strain>
    </source>
</reference>
<feature type="chain" id="PRO_0000368444" description="ATP synthase subunit b">
    <location>
        <begin position="1"/>
        <end position="156"/>
    </location>
</feature>
<feature type="transmembrane region" description="Helical" evidence="1">
    <location>
        <begin position="7"/>
        <end position="27"/>
    </location>
</feature>
<gene>
    <name evidence="1" type="primary">atpF</name>
    <name type="ordered locus">CbuK_0049</name>
</gene>
<evidence type="ECO:0000255" key="1">
    <source>
        <dbReference type="HAMAP-Rule" id="MF_01398"/>
    </source>
</evidence>
<name>ATPF_COXB1</name>
<accession>B6J959</accession>
<comment type="function">
    <text evidence="1">F(1)F(0) ATP synthase produces ATP from ADP in the presence of a proton or sodium gradient. F-type ATPases consist of two structural domains, F(1) containing the extramembraneous catalytic core and F(0) containing the membrane proton channel, linked together by a central stalk and a peripheral stalk. During catalysis, ATP synthesis in the catalytic domain of F(1) is coupled via a rotary mechanism of the central stalk subunits to proton translocation.</text>
</comment>
<comment type="function">
    <text evidence="1">Component of the F(0) channel, it forms part of the peripheral stalk, linking F(1) to F(0).</text>
</comment>
<comment type="subunit">
    <text evidence="1">F-type ATPases have 2 components, F(1) - the catalytic core - and F(0) - the membrane proton channel. F(1) has five subunits: alpha(3), beta(3), gamma(1), delta(1), epsilon(1). F(0) has three main subunits: a(1), b(2) and c(10-14). The alpha and beta chains form an alternating ring which encloses part of the gamma chain. F(1) is attached to F(0) by a central stalk formed by the gamma and epsilon chains, while a peripheral stalk is formed by the delta and b chains.</text>
</comment>
<comment type="subcellular location">
    <subcellularLocation>
        <location evidence="1">Cell inner membrane</location>
        <topology evidence="1">Single-pass membrane protein</topology>
    </subcellularLocation>
</comment>
<comment type="similarity">
    <text evidence="1">Belongs to the ATPase B chain family.</text>
</comment>
<protein>
    <recommendedName>
        <fullName evidence="1">ATP synthase subunit b</fullName>
    </recommendedName>
    <alternativeName>
        <fullName evidence="1">ATP synthase F(0) sector subunit b</fullName>
    </alternativeName>
    <alternativeName>
        <fullName evidence="1">ATPase subunit I</fullName>
    </alternativeName>
    <alternativeName>
        <fullName evidence="1">F-type ATPase subunit b</fullName>
        <shortName evidence="1">F-ATPase subunit b</shortName>
    </alternativeName>
</protein>
<proteinExistence type="inferred from homology"/>
<organism>
    <name type="scientific">Coxiella burnetii (strain CbuK_Q154)</name>
    <name type="common">Coxiella burnetii (strain Q154)</name>
    <dbReference type="NCBI Taxonomy" id="434924"/>
    <lineage>
        <taxon>Bacteria</taxon>
        <taxon>Pseudomonadati</taxon>
        <taxon>Pseudomonadota</taxon>
        <taxon>Gammaproteobacteria</taxon>
        <taxon>Legionellales</taxon>
        <taxon>Coxiellaceae</taxon>
        <taxon>Coxiella</taxon>
    </lineage>
</organism>
<keyword id="KW-0066">ATP synthesis</keyword>
<keyword id="KW-0997">Cell inner membrane</keyword>
<keyword id="KW-1003">Cell membrane</keyword>
<keyword id="KW-0138">CF(0)</keyword>
<keyword id="KW-0375">Hydrogen ion transport</keyword>
<keyword id="KW-0406">Ion transport</keyword>
<keyword id="KW-0472">Membrane</keyword>
<keyword id="KW-0812">Transmembrane</keyword>
<keyword id="KW-1133">Transmembrane helix</keyword>
<keyword id="KW-0813">Transport</keyword>
<dbReference type="EMBL" id="CP001020">
    <property type="protein sequence ID" value="ACJ19376.1"/>
    <property type="molecule type" value="Genomic_DNA"/>
</dbReference>
<dbReference type="RefSeq" id="WP_005770032.1">
    <property type="nucleotide sequence ID" value="NC_011528.1"/>
</dbReference>
<dbReference type="SMR" id="B6J959"/>
<dbReference type="KEGG" id="cbc:CbuK_0049"/>
<dbReference type="HOGENOM" id="CLU_079215_4_5_6"/>
<dbReference type="GO" id="GO:0005886">
    <property type="term" value="C:plasma membrane"/>
    <property type="evidence" value="ECO:0007669"/>
    <property type="project" value="UniProtKB-SubCell"/>
</dbReference>
<dbReference type="GO" id="GO:0045259">
    <property type="term" value="C:proton-transporting ATP synthase complex"/>
    <property type="evidence" value="ECO:0007669"/>
    <property type="project" value="UniProtKB-KW"/>
</dbReference>
<dbReference type="GO" id="GO:0046933">
    <property type="term" value="F:proton-transporting ATP synthase activity, rotational mechanism"/>
    <property type="evidence" value="ECO:0007669"/>
    <property type="project" value="UniProtKB-UniRule"/>
</dbReference>
<dbReference type="GO" id="GO:0046961">
    <property type="term" value="F:proton-transporting ATPase activity, rotational mechanism"/>
    <property type="evidence" value="ECO:0007669"/>
    <property type="project" value="TreeGrafter"/>
</dbReference>
<dbReference type="CDD" id="cd06503">
    <property type="entry name" value="ATP-synt_Fo_b"/>
    <property type="match status" value="1"/>
</dbReference>
<dbReference type="FunFam" id="1.20.5.620:FF:000001">
    <property type="entry name" value="ATP synthase subunit b"/>
    <property type="match status" value="1"/>
</dbReference>
<dbReference type="Gene3D" id="1.20.5.620">
    <property type="entry name" value="F1F0 ATP synthase subunit B, membrane domain"/>
    <property type="match status" value="1"/>
</dbReference>
<dbReference type="HAMAP" id="MF_01398">
    <property type="entry name" value="ATP_synth_b_bprime"/>
    <property type="match status" value="1"/>
</dbReference>
<dbReference type="InterPro" id="IPR028987">
    <property type="entry name" value="ATP_synth_B-like_membr_sf"/>
</dbReference>
<dbReference type="InterPro" id="IPR002146">
    <property type="entry name" value="ATP_synth_b/b'su_bac/chlpt"/>
</dbReference>
<dbReference type="InterPro" id="IPR005864">
    <property type="entry name" value="ATP_synth_F0_bsu_bac"/>
</dbReference>
<dbReference type="InterPro" id="IPR050059">
    <property type="entry name" value="ATP_synthase_B_chain"/>
</dbReference>
<dbReference type="NCBIfam" id="TIGR01144">
    <property type="entry name" value="ATP_synt_b"/>
    <property type="match status" value="1"/>
</dbReference>
<dbReference type="NCBIfam" id="NF004411">
    <property type="entry name" value="PRK05759.1-2"/>
    <property type="match status" value="1"/>
</dbReference>
<dbReference type="PANTHER" id="PTHR33445:SF1">
    <property type="entry name" value="ATP SYNTHASE SUBUNIT B"/>
    <property type="match status" value="1"/>
</dbReference>
<dbReference type="PANTHER" id="PTHR33445">
    <property type="entry name" value="ATP SYNTHASE SUBUNIT B', CHLOROPLASTIC"/>
    <property type="match status" value="1"/>
</dbReference>
<dbReference type="Pfam" id="PF00430">
    <property type="entry name" value="ATP-synt_B"/>
    <property type="match status" value="1"/>
</dbReference>
<dbReference type="SUPFAM" id="SSF81573">
    <property type="entry name" value="F1F0 ATP synthase subunit B, membrane domain"/>
    <property type="match status" value="1"/>
</dbReference>